<keyword id="KW-1185">Reference proteome</keyword>
<proteinExistence type="predicted"/>
<accession>B4YNF7</accession>
<dbReference type="EMBL" id="EU606015">
    <property type="protein sequence ID" value="ACF17001.1"/>
    <property type="molecule type" value="Genomic_DNA"/>
</dbReference>
<dbReference type="RefSeq" id="YP_002122378.1">
    <property type="nucleotide sequence ID" value="NC_011132.1"/>
</dbReference>
<dbReference type="SMR" id="B4YNF7"/>
<dbReference type="KEGG" id="vg:6760333"/>
<dbReference type="Proteomes" id="UP000001863">
    <property type="component" value="Segment"/>
</dbReference>
<protein>
    <recommendedName>
        <fullName>Uncharacterized protein V17</fullName>
    </recommendedName>
</protein>
<organism>
    <name type="scientific">Sputnik virophage</name>
    <dbReference type="NCBI Taxonomy" id="543939"/>
    <lineage>
        <taxon>Viruses</taxon>
        <taxon>Varidnaviria</taxon>
        <taxon>Bamfordvirae</taxon>
        <taxon>Preplasmiviricota</taxon>
        <taxon>Maveriviricetes</taxon>
        <taxon>Priklausovirales</taxon>
        <taxon>Lavidaviridae</taxon>
        <taxon>Sputnikvirus</taxon>
        <taxon>Mimivirus-dependent virus Sputnik</taxon>
    </lineage>
</organism>
<reference key="1">
    <citation type="journal article" date="2008" name="Nature">
        <title>The virophage as a unique parasite of the giant mimivirus.</title>
        <authorList>
            <person name="La Scola B."/>
            <person name="Desnues C."/>
            <person name="Pagnier I."/>
            <person name="Robert C."/>
            <person name="Barrassi L."/>
            <person name="Fournous G."/>
            <person name="Merchat M."/>
            <person name="Suzan-Monti M."/>
            <person name="Forterre P."/>
            <person name="Koonin E."/>
            <person name="Raoult D."/>
        </authorList>
    </citation>
    <scope>NUCLEOTIDE SEQUENCE [GENOMIC DNA]</scope>
</reference>
<organismHost>
    <name type="scientific">Acanthamoeba polyphaga</name>
    <name type="common">Amoeba</name>
    <dbReference type="NCBI Taxonomy" id="5757"/>
</organismHost>
<gene>
    <name type="ORF">ORF17</name>
</gene>
<sequence length="88" mass="10604">MDLRLQQKILKYQQVRKYYVEDGYTIDEACKKVKINKTTFYNYRKLLKENNLLEIVETNNNINNILSSEVLNKKKIQSKKTTPKKKYN</sequence>
<feature type="chain" id="PRO_0000369825" description="Uncharacterized protein V17">
    <location>
        <begin position="1"/>
        <end position="88"/>
    </location>
</feature>
<name>V17_SPTNK</name>